<organism>
    <name type="scientific">Bos taurus</name>
    <name type="common">Bovine</name>
    <dbReference type="NCBI Taxonomy" id="9913"/>
    <lineage>
        <taxon>Eukaryota</taxon>
        <taxon>Metazoa</taxon>
        <taxon>Chordata</taxon>
        <taxon>Craniata</taxon>
        <taxon>Vertebrata</taxon>
        <taxon>Euteleostomi</taxon>
        <taxon>Mammalia</taxon>
        <taxon>Eutheria</taxon>
        <taxon>Laurasiatheria</taxon>
        <taxon>Artiodactyla</taxon>
        <taxon>Ruminantia</taxon>
        <taxon>Pecora</taxon>
        <taxon>Bovidae</taxon>
        <taxon>Bovinae</taxon>
        <taxon>Bos</taxon>
    </lineage>
</organism>
<dbReference type="EMBL" id="BC133487">
    <property type="protein sequence ID" value="AAI33488.1"/>
    <property type="molecule type" value="mRNA"/>
</dbReference>
<dbReference type="RefSeq" id="NP_001077107.1">
    <property type="nucleotide sequence ID" value="NM_001083638.2"/>
</dbReference>
<dbReference type="SMR" id="A2VDZ3"/>
<dbReference type="FunCoup" id="A2VDZ3">
    <property type="interactions" value="1285"/>
</dbReference>
<dbReference type="STRING" id="9913.ENSBTAP00000073246"/>
<dbReference type="PaxDb" id="9913-ENSBTAP00000014074"/>
<dbReference type="Ensembl" id="ENSBTAT00000014074.5">
    <property type="protein sequence ID" value="ENSBTAP00000014074.4"/>
    <property type="gene ID" value="ENSBTAG00000010649.7"/>
</dbReference>
<dbReference type="GeneID" id="407231"/>
<dbReference type="KEGG" id="bta:407231"/>
<dbReference type="CTD" id="4205"/>
<dbReference type="VEuPathDB" id="HostDB:ENSBTAG00000010649"/>
<dbReference type="VGNC" id="VGNC:31372">
    <property type="gene designation" value="MEF2A"/>
</dbReference>
<dbReference type="eggNOG" id="KOG0014">
    <property type="taxonomic scope" value="Eukaryota"/>
</dbReference>
<dbReference type="GeneTree" id="ENSGT00940000156205"/>
<dbReference type="HOGENOM" id="CLU_022902_4_0_1"/>
<dbReference type="InParanoid" id="A2VDZ3"/>
<dbReference type="OrthoDB" id="1898716at2759"/>
<dbReference type="TreeFam" id="TF314067"/>
<dbReference type="Proteomes" id="UP000009136">
    <property type="component" value="Chromosome 21"/>
</dbReference>
<dbReference type="Bgee" id="ENSBTAG00000010649">
    <property type="expression patterns" value="Expressed in monocyte and 107 other cell types or tissues"/>
</dbReference>
<dbReference type="GO" id="GO:0000785">
    <property type="term" value="C:chromatin"/>
    <property type="evidence" value="ECO:0007669"/>
    <property type="project" value="Ensembl"/>
</dbReference>
<dbReference type="GO" id="GO:0005829">
    <property type="term" value="C:cytosol"/>
    <property type="evidence" value="ECO:0007669"/>
    <property type="project" value="Ensembl"/>
</dbReference>
<dbReference type="GO" id="GO:0005654">
    <property type="term" value="C:nucleoplasm"/>
    <property type="evidence" value="ECO:0007669"/>
    <property type="project" value="Ensembl"/>
</dbReference>
<dbReference type="GO" id="GO:0005634">
    <property type="term" value="C:nucleus"/>
    <property type="evidence" value="ECO:0000250"/>
    <property type="project" value="UniProtKB"/>
</dbReference>
<dbReference type="GO" id="GO:0005667">
    <property type="term" value="C:transcription regulator complex"/>
    <property type="evidence" value="ECO:0007669"/>
    <property type="project" value="Ensembl"/>
</dbReference>
<dbReference type="GO" id="GO:0003682">
    <property type="term" value="F:chromatin binding"/>
    <property type="evidence" value="ECO:0000250"/>
    <property type="project" value="UniProtKB"/>
</dbReference>
<dbReference type="GO" id="GO:0001228">
    <property type="term" value="F:DNA-binding transcription activator activity, RNA polymerase II-specific"/>
    <property type="evidence" value="ECO:0007669"/>
    <property type="project" value="Ensembl"/>
</dbReference>
<dbReference type="GO" id="GO:0000981">
    <property type="term" value="F:DNA-binding transcription factor activity, RNA polymerase II-specific"/>
    <property type="evidence" value="ECO:0000250"/>
    <property type="project" value="UniProtKB"/>
</dbReference>
<dbReference type="GO" id="GO:0140297">
    <property type="term" value="F:DNA-binding transcription factor binding"/>
    <property type="evidence" value="ECO:0000250"/>
    <property type="project" value="UniProtKB"/>
</dbReference>
<dbReference type="GO" id="GO:0035035">
    <property type="term" value="F:histone acetyltransferase binding"/>
    <property type="evidence" value="ECO:0000250"/>
    <property type="project" value="UniProtKB"/>
</dbReference>
<dbReference type="GO" id="GO:0042826">
    <property type="term" value="F:histone deacetylase binding"/>
    <property type="evidence" value="ECO:0000250"/>
    <property type="project" value="UniProtKB"/>
</dbReference>
<dbReference type="GO" id="GO:0046982">
    <property type="term" value="F:protein heterodimerization activity"/>
    <property type="evidence" value="ECO:0007669"/>
    <property type="project" value="Ensembl"/>
</dbReference>
<dbReference type="GO" id="GO:0019901">
    <property type="term" value="F:protein kinase binding"/>
    <property type="evidence" value="ECO:0007669"/>
    <property type="project" value="Ensembl"/>
</dbReference>
<dbReference type="GO" id="GO:0000978">
    <property type="term" value="F:RNA polymerase II cis-regulatory region sequence-specific DNA binding"/>
    <property type="evidence" value="ECO:0000318"/>
    <property type="project" value="GO_Central"/>
</dbReference>
<dbReference type="GO" id="GO:0000977">
    <property type="term" value="F:RNA polymerase II transcription regulatory region sequence-specific DNA binding"/>
    <property type="evidence" value="ECO:0000250"/>
    <property type="project" value="UniProtKB"/>
</dbReference>
<dbReference type="GO" id="GO:0061629">
    <property type="term" value="F:RNA polymerase II-specific DNA-binding transcription factor binding"/>
    <property type="evidence" value="ECO:0007669"/>
    <property type="project" value="Ensembl"/>
</dbReference>
<dbReference type="GO" id="GO:0046332">
    <property type="term" value="F:SMAD binding"/>
    <property type="evidence" value="ECO:0000250"/>
    <property type="project" value="UniProtKB"/>
</dbReference>
<dbReference type="GO" id="GO:0006915">
    <property type="term" value="P:apoptotic process"/>
    <property type="evidence" value="ECO:0007669"/>
    <property type="project" value="UniProtKB-KW"/>
</dbReference>
<dbReference type="GO" id="GO:0061337">
    <property type="term" value="P:cardiac conduction"/>
    <property type="evidence" value="ECO:0000250"/>
    <property type="project" value="UniProtKB"/>
</dbReference>
<dbReference type="GO" id="GO:0071277">
    <property type="term" value="P:cellular response to calcium ion"/>
    <property type="evidence" value="ECO:0000250"/>
    <property type="project" value="UniProtKB"/>
</dbReference>
<dbReference type="GO" id="GO:0048813">
    <property type="term" value="P:dendrite morphogenesis"/>
    <property type="evidence" value="ECO:0000250"/>
    <property type="project" value="UniProtKB"/>
</dbReference>
<dbReference type="GO" id="GO:0006351">
    <property type="term" value="P:DNA-templated transcription"/>
    <property type="evidence" value="ECO:0007669"/>
    <property type="project" value="Ensembl"/>
</dbReference>
<dbReference type="GO" id="GO:0070375">
    <property type="term" value="P:ERK5 cascade"/>
    <property type="evidence" value="ECO:0000250"/>
    <property type="project" value="UniProtKB"/>
</dbReference>
<dbReference type="GO" id="GO:0000165">
    <property type="term" value="P:MAPK cascade"/>
    <property type="evidence" value="ECO:0000250"/>
    <property type="project" value="UniProtKB"/>
</dbReference>
<dbReference type="GO" id="GO:0000002">
    <property type="term" value="P:mitochondrial genome maintenance"/>
    <property type="evidence" value="ECO:0000250"/>
    <property type="project" value="UniProtKB"/>
</dbReference>
<dbReference type="GO" id="GO:0048311">
    <property type="term" value="P:mitochondrion distribution"/>
    <property type="evidence" value="ECO:0000250"/>
    <property type="project" value="UniProtKB"/>
</dbReference>
<dbReference type="GO" id="GO:0000122">
    <property type="term" value="P:negative regulation of transcription by RNA polymerase II"/>
    <property type="evidence" value="ECO:0000250"/>
    <property type="project" value="UniProtKB"/>
</dbReference>
<dbReference type="GO" id="GO:0010613">
    <property type="term" value="P:positive regulation of cardiac muscle hypertrophy"/>
    <property type="evidence" value="ECO:0007669"/>
    <property type="project" value="Ensembl"/>
</dbReference>
<dbReference type="GO" id="GO:0046326">
    <property type="term" value="P:positive regulation of D-glucose import"/>
    <property type="evidence" value="ECO:0007669"/>
    <property type="project" value="Ensembl"/>
</dbReference>
<dbReference type="GO" id="GO:0010628">
    <property type="term" value="P:positive regulation of gene expression"/>
    <property type="evidence" value="ECO:0007669"/>
    <property type="project" value="Ensembl"/>
</dbReference>
<dbReference type="GO" id="GO:0045944">
    <property type="term" value="P:positive regulation of transcription by RNA polymerase II"/>
    <property type="evidence" value="ECO:0000250"/>
    <property type="project" value="UniProtKB"/>
</dbReference>
<dbReference type="GO" id="GO:0055005">
    <property type="term" value="P:ventricular cardiac myofibril assembly"/>
    <property type="evidence" value="ECO:0000250"/>
    <property type="project" value="UniProtKB"/>
</dbReference>
<dbReference type="CDD" id="cd00265">
    <property type="entry name" value="MADS_MEF2_like"/>
    <property type="match status" value="1"/>
</dbReference>
<dbReference type="FunFam" id="3.40.1810.10:FF:000001">
    <property type="entry name" value="Myocyte-specific enhancer factor 2A homolog"/>
    <property type="match status" value="1"/>
</dbReference>
<dbReference type="Gene3D" id="3.40.1810.10">
    <property type="entry name" value="Transcription factor, MADS-box"/>
    <property type="match status" value="1"/>
</dbReference>
<dbReference type="InterPro" id="IPR022102">
    <property type="entry name" value="HJURP_C"/>
</dbReference>
<dbReference type="InterPro" id="IPR033896">
    <property type="entry name" value="MEF2-like_N"/>
</dbReference>
<dbReference type="InterPro" id="IPR002100">
    <property type="entry name" value="TF_MADSbox"/>
</dbReference>
<dbReference type="InterPro" id="IPR036879">
    <property type="entry name" value="TF_MADSbox_sf"/>
</dbReference>
<dbReference type="PANTHER" id="PTHR11945">
    <property type="entry name" value="MADS BOX PROTEIN"/>
    <property type="match status" value="1"/>
</dbReference>
<dbReference type="PANTHER" id="PTHR11945:SF637">
    <property type="entry name" value="MYOCYTE-SPECIFIC ENHANCER FACTOR 2A"/>
    <property type="match status" value="1"/>
</dbReference>
<dbReference type="Pfam" id="PF12347">
    <property type="entry name" value="HJURP_C"/>
    <property type="match status" value="1"/>
</dbReference>
<dbReference type="Pfam" id="PF00319">
    <property type="entry name" value="SRF-TF"/>
    <property type="match status" value="1"/>
</dbReference>
<dbReference type="PRINTS" id="PR00404">
    <property type="entry name" value="MADSDOMAIN"/>
</dbReference>
<dbReference type="SMART" id="SM00432">
    <property type="entry name" value="MADS"/>
    <property type="match status" value="1"/>
</dbReference>
<dbReference type="SUPFAM" id="SSF55455">
    <property type="entry name" value="SRF-like"/>
    <property type="match status" value="1"/>
</dbReference>
<dbReference type="PROSITE" id="PS00350">
    <property type="entry name" value="MADS_BOX_1"/>
    <property type="match status" value="1"/>
</dbReference>
<dbReference type="PROSITE" id="PS50066">
    <property type="entry name" value="MADS_BOX_2"/>
    <property type="match status" value="1"/>
</dbReference>
<name>MEF2A_BOVIN</name>
<reference key="1">
    <citation type="submission" date="2007-02" db="EMBL/GenBank/DDBJ databases">
        <authorList>
            <consortium name="NIH - Mammalian Gene Collection (MGC) project"/>
        </authorList>
    </citation>
    <scope>NUCLEOTIDE SEQUENCE [LARGE SCALE MRNA]</scope>
    <source>
        <strain>Hereford</strain>
        <tissue>Thymus</tissue>
    </source>
</reference>
<feature type="chain" id="PRO_0000366967" description="Myocyte-specific enhancer factor 2A">
    <location>
        <begin position="1"/>
        <end position="492"/>
    </location>
</feature>
<feature type="domain" description="MADS-box" evidence="6">
    <location>
        <begin position="3"/>
        <end position="57"/>
    </location>
</feature>
<feature type="DNA-binding region" description="Mef2-type" evidence="5">
    <location>
        <begin position="58"/>
        <end position="86"/>
    </location>
</feature>
<feature type="region of interest" description="Disordered" evidence="7">
    <location>
        <begin position="183"/>
        <end position="227"/>
    </location>
</feature>
<feature type="region of interest" description="Disordered" evidence="7">
    <location>
        <begin position="242"/>
        <end position="270"/>
    </location>
</feature>
<feature type="region of interest" description="Required for interaction with MAPKs" evidence="1">
    <location>
        <begin position="266"/>
        <end position="283"/>
    </location>
</feature>
<feature type="region of interest" description="Disordered" evidence="7">
    <location>
        <begin position="382"/>
        <end position="492"/>
    </location>
</feature>
<feature type="compositionally biased region" description="Polar residues" evidence="7">
    <location>
        <begin position="209"/>
        <end position="227"/>
    </location>
</feature>
<feature type="compositionally biased region" description="Polar residues" evidence="7">
    <location>
        <begin position="382"/>
        <end position="394"/>
    </location>
</feature>
<feature type="compositionally biased region" description="Pro residues" evidence="7">
    <location>
        <begin position="417"/>
        <end position="430"/>
    </location>
</feature>
<feature type="compositionally biased region" description="Low complexity" evidence="7">
    <location>
        <begin position="438"/>
        <end position="451"/>
    </location>
</feature>
<feature type="compositionally biased region" description="Basic and acidic residues" evidence="7">
    <location>
        <begin position="452"/>
        <end position="462"/>
    </location>
</feature>
<feature type="compositionally biased region" description="Basic and acidic residues" evidence="7">
    <location>
        <begin position="473"/>
        <end position="492"/>
    </location>
</feature>
<feature type="site" description="Cleavage" evidence="8">
    <location>
        <begin position="176"/>
        <end position="177"/>
    </location>
</feature>
<feature type="site" description="Cleavage" evidence="8">
    <location>
        <begin position="213"/>
        <end position="214"/>
    </location>
</feature>
<feature type="site" description="Cleavage" evidence="8">
    <location>
        <begin position="451"/>
        <end position="452"/>
    </location>
</feature>
<feature type="modified residue" description="Phosphoserine; by CK2" evidence="1">
    <location>
        <position position="59"/>
    </location>
</feature>
<feature type="modified residue" description="Phosphoserine" evidence="2">
    <location>
        <position position="98"/>
    </location>
</feature>
<feature type="modified residue" description="Phosphoserine" evidence="2">
    <location>
        <position position="235"/>
    </location>
</feature>
<feature type="modified residue" description="N6-acetyllysine" evidence="2">
    <location>
        <position position="249"/>
    </location>
</feature>
<feature type="modified residue" description="Phosphoserine" evidence="2">
    <location>
        <position position="255"/>
    </location>
</feature>
<feature type="modified residue" description="Phosphothreonine; by MAPK7 and MAPK14" evidence="2">
    <location>
        <position position="304"/>
    </location>
</feature>
<feature type="modified residue" description="Phosphothreonine; by MAPK7 and MAPK14" evidence="2">
    <location>
        <position position="311"/>
    </location>
</feature>
<feature type="modified residue" description="Phosphoserine; by MAPK7" evidence="2">
    <location>
        <position position="347"/>
    </location>
</feature>
<feature type="modified residue" description="N6-acetyllysine; alternate" evidence="3">
    <location>
        <position position="395"/>
    </location>
</feature>
<feature type="modified residue" description="Phosphoserine; by CDK5" evidence="2">
    <location>
        <position position="400"/>
    </location>
</feature>
<feature type="modified residue" description="Phosphothreonine" evidence="4">
    <location>
        <position position="407"/>
    </location>
</feature>
<feature type="modified residue" description="Phosphoserine; by MAPK" evidence="2">
    <location>
        <position position="438"/>
    </location>
</feature>
<feature type="cross-link" description="Glycyl lysine isopeptide (Lys-Gly) (interchain with G-Cter in SUMO); alternate" evidence="1">
    <location>
        <position position="395"/>
    </location>
</feature>
<accession>A2VDZ3</accession>
<keyword id="KW-0007">Acetylation</keyword>
<keyword id="KW-0010">Activator</keyword>
<keyword id="KW-0053">Apoptosis</keyword>
<keyword id="KW-0217">Developmental protein</keyword>
<keyword id="KW-0221">Differentiation</keyword>
<keyword id="KW-0238">DNA-binding</keyword>
<keyword id="KW-1017">Isopeptide bond</keyword>
<keyword id="KW-0524">Neurogenesis</keyword>
<keyword id="KW-0539">Nucleus</keyword>
<keyword id="KW-0597">Phosphoprotein</keyword>
<keyword id="KW-1185">Reference proteome</keyword>
<keyword id="KW-0804">Transcription</keyword>
<keyword id="KW-0805">Transcription regulation</keyword>
<keyword id="KW-0832">Ubl conjugation</keyword>
<sequence length="492" mass="52782">MGRKKIQITRIMDERNRQVTFTKRKFGLMKKAYELSVLCDCEIALIIFNSSNKLFQYASTDMDKVLLKYTEYNEPHESRTNSDIVEALNKKEHRGCDSPDPDTSYVLTPHTEEKYKKINEEFDNMMRNHKIAPGLPPQNFSMSVTVPVTSPSALSYTNPGSSLVSPSLAASSALADTSMLSPPQATLHRNVSPGAPQRPPSTGSAGGMLSTSDLTVPNGAGSSPVGNGFVNSRASPNLIGTTGANSLGKVMPTKSPPPPGGGSLGMNSRKPDLRVVIPPSSKGMMPPLNTQRISSSQATQPLATPVVSVTTPSLPPQGLVYSAMPTAYNTDYSLTSADLSALQGFNSPGMLSLGQVSAWQQHHLGQAALNSLVAGGQLSQGSNLSINTNQNINIKSEPISPPRDRMTPSGFQQQQQPQPPPPPPQAPQPQPRQEVGRSPVDSLSSSSSSYDGSDREDPRGDFHSPVVLGRPPNSEDRESPSVKRMRMDAWVT</sequence>
<proteinExistence type="evidence at transcript level"/>
<gene>
    <name type="primary">MEF2A</name>
</gene>
<evidence type="ECO:0000250" key="1"/>
<evidence type="ECO:0000250" key="2">
    <source>
        <dbReference type="UniProtKB" id="Q02078"/>
    </source>
</evidence>
<evidence type="ECO:0000250" key="3">
    <source>
        <dbReference type="UniProtKB" id="Q2MJT0"/>
    </source>
</evidence>
<evidence type="ECO:0000250" key="4">
    <source>
        <dbReference type="UniProtKB" id="Q60929"/>
    </source>
</evidence>
<evidence type="ECO:0000255" key="5"/>
<evidence type="ECO:0000255" key="6">
    <source>
        <dbReference type="PROSITE-ProRule" id="PRU00251"/>
    </source>
</evidence>
<evidence type="ECO:0000256" key="7">
    <source>
        <dbReference type="SAM" id="MobiDB-lite"/>
    </source>
</evidence>
<evidence type="ECO:0000305" key="8"/>
<protein>
    <recommendedName>
        <fullName>Myocyte-specific enhancer factor 2A</fullName>
    </recommendedName>
</protein>
<comment type="function">
    <text evidence="1">Transcriptional activator which binds specifically to the MEF2 element, 5'-YTA[AT](4)TAR-3', found in numerous muscle-specific genes. Also involved in the activation of numerous growth factor- and stress-induced genes. Mediates cellular functions not only in skeletal and cardiac muscle development, but also in neuronal differentiation and survival. Plays diverse roles in the control of cell growth, survival and apoptosis via p38 MAPK signaling in muscle-specific and/or growth factor-related transcription. In cerebellar granule neurons, phosphorylated and sumoylated MEF2A represses transcription of NUR77 promoting synaptic differentiation. Associates with chromatin to the ZNF16 promoter (By similarity).</text>
</comment>
<comment type="subunit">
    <text evidence="1">Binds DNA as a homo- or heterodimer (By similarity). Dimerizes with MEF2D. Interacts with HDAC7. Interacts with PIAS1; the interaction enhances sumoylation. Interacts with HDAC4, HDAC9 and SLC2A4RG. Interacts (via the N-terminal) with MAPK7; the interaction results in the phosphorylation and transcriptional activity of MEF2A (By similarity).</text>
</comment>
<comment type="subcellular location">
    <subcellularLocation>
        <location evidence="6">Nucleus</location>
    </subcellularLocation>
</comment>
<comment type="PTM">
    <text evidence="1">Constitutive phosphorylation on Ser-400 promotes Lys-395 sumoylation thus preventing acetylation at this site. Dephosphorylation on Ser-400 by PPP3CA upon neuron depolarization promotes a switch from sumoylation to acetylation on residue Lys-395 leading to inhibition of dendrite claw differentiation. Phosphorylation on Thr-304 and Thr-311 are the main sites involved in p38 MAPK signaling and activate transcription. Phosphorylated on these sites by MAPK14/p38alpha and MAPK11/p38beta, but not by MAPK13/p38delta nor by MAPK12/p38gamma. Phosphorylation on Ser-400 by CDK5 induced by neurotoxicity inhibits MEF2A transcriptional activation leading to apoptosis of cortical neurons. Phosphorylation on Thr-304, Thr-311 and Ser-347 can be induced by EGF (By similarity).</text>
</comment>
<comment type="PTM">
    <text evidence="1">Sumoylation on Lys-395 is enhanced by PIAS1 and represses transcriptional activity. Phosphorylation on Ser-400 is required for sumoylation. Has no effect on nuclear location nor on DNA binding. Sumoylated with SUMO1 and, to a lesser extent with SUMO2 and SUMO3. PIASx facilitates sumoylation in postsynaptic dendrites in the cerebellar cortex and promotes their morphogenesis (By similarity).</text>
</comment>
<comment type="PTM">
    <text evidence="1">Acetylation on Lys-395 activates transcriptional activity. Acetylated by p300 on several sites in diffentiating myocytes. Acetylation on Lys-4 increases DNA binding and transactivation (By similarity). Hyperacetylation by p300 leads to enhanced cardiac myocyte growth and heart failure (By similarity).</text>
</comment>
<comment type="PTM">
    <text evidence="1">Proteolytically cleaved in cerebellar granule neurons on several sites by caspase 3 and caspase 7 following neurotoxicity. Preferentially cleaves the CDK5-mediated hyperphosphorylated form which leads to neuron apoptosis and transcriptional inactivation (By similarity).</text>
</comment>